<feature type="initiator methionine" description="Removed">
    <location>
        <position position="1"/>
    </location>
</feature>
<feature type="chain" id="PRO_0000176408" description="Asparagine--tRNA ligase">
    <location>
        <begin position="2"/>
        <end position="466"/>
    </location>
</feature>
<proteinExistence type="inferred from homology"/>
<accession>P58694</accession>
<gene>
    <name evidence="1" type="primary">asnS</name>
    <name type="synonym">tss</name>
    <name type="ordered locus">Z1278</name>
    <name type="ordered locus">ECs1013</name>
</gene>
<dbReference type="EC" id="6.1.1.22" evidence="1"/>
<dbReference type="EMBL" id="AE005174">
    <property type="protein sequence ID" value="AAG55415.1"/>
    <property type="molecule type" value="Genomic_DNA"/>
</dbReference>
<dbReference type="EMBL" id="BA000007">
    <property type="protein sequence ID" value="BAB34436.1"/>
    <property type="molecule type" value="Genomic_DNA"/>
</dbReference>
<dbReference type="PIR" id="C85619">
    <property type="entry name" value="C85619"/>
</dbReference>
<dbReference type="PIR" id="E90755">
    <property type="entry name" value="E90755"/>
</dbReference>
<dbReference type="RefSeq" id="NP_309040.1">
    <property type="nucleotide sequence ID" value="NC_002695.1"/>
</dbReference>
<dbReference type="RefSeq" id="WP_000117895.1">
    <property type="nucleotide sequence ID" value="NZ_VOAI01000006.1"/>
</dbReference>
<dbReference type="SMR" id="P58694"/>
<dbReference type="STRING" id="155864.Z1278"/>
<dbReference type="GeneID" id="917756"/>
<dbReference type="KEGG" id="ece:Z1278"/>
<dbReference type="KEGG" id="ecs:ECs_1013"/>
<dbReference type="PATRIC" id="fig|386585.9.peg.1134"/>
<dbReference type="eggNOG" id="COG0017">
    <property type="taxonomic scope" value="Bacteria"/>
</dbReference>
<dbReference type="HOGENOM" id="CLU_004553_2_0_6"/>
<dbReference type="OMA" id="PEMAFYD"/>
<dbReference type="Proteomes" id="UP000000558">
    <property type="component" value="Chromosome"/>
</dbReference>
<dbReference type="Proteomes" id="UP000002519">
    <property type="component" value="Chromosome"/>
</dbReference>
<dbReference type="GO" id="GO:0005737">
    <property type="term" value="C:cytoplasm"/>
    <property type="evidence" value="ECO:0007669"/>
    <property type="project" value="UniProtKB-SubCell"/>
</dbReference>
<dbReference type="GO" id="GO:0004816">
    <property type="term" value="F:asparagine-tRNA ligase activity"/>
    <property type="evidence" value="ECO:0007669"/>
    <property type="project" value="UniProtKB-UniRule"/>
</dbReference>
<dbReference type="GO" id="GO:0005524">
    <property type="term" value="F:ATP binding"/>
    <property type="evidence" value="ECO:0007669"/>
    <property type="project" value="UniProtKB-UniRule"/>
</dbReference>
<dbReference type="GO" id="GO:0003676">
    <property type="term" value="F:nucleic acid binding"/>
    <property type="evidence" value="ECO:0007669"/>
    <property type="project" value="InterPro"/>
</dbReference>
<dbReference type="GO" id="GO:0006421">
    <property type="term" value="P:asparaginyl-tRNA aminoacylation"/>
    <property type="evidence" value="ECO:0007669"/>
    <property type="project" value="UniProtKB-UniRule"/>
</dbReference>
<dbReference type="CDD" id="cd00776">
    <property type="entry name" value="AsxRS_core"/>
    <property type="match status" value="1"/>
</dbReference>
<dbReference type="CDD" id="cd04318">
    <property type="entry name" value="EcAsnRS_like_N"/>
    <property type="match status" value="1"/>
</dbReference>
<dbReference type="FunFam" id="2.40.50.140:FF:000116">
    <property type="entry name" value="Asparagine--tRNA ligase"/>
    <property type="match status" value="1"/>
</dbReference>
<dbReference type="FunFam" id="3.30.930.10:FF:000016">
    <property type="entry name" value="Asparagine--tRNA ligase"/>
    <property type="match status" value="1"/>
</dbReference>
<dbReference type="Gene3D" id="3.30.930.10">
    <property type="entry name" value="Bira Bifunctional Protein, Domain 2"/>
    <property type="match status" value="1"/>
</dbReference>
<dbReference type="Gene3D" id="2.40.50.140">
    <property type="entry name" value="Nucleic acid-binding proteins"/>
    <property type="match status" value="1"/>
</dbReference>
<dbReference type="HAMAP" id="MF_00534">
    <property type="entry name" value="Asn_tRNA_synth"/>
    <property type="match status" value="1"/>
</dbReference>
<dbReference type="InterPro" id="IPR004364">
    <property type="entry name" value="Aa-tRNA-synt_II"/>
</dbReference>
<dbReference type="InterPro" id="IPR006195">
    <property type="entry name" value="aa-tRNA-synth_II"/>
</dbReference>
<dbReference type="InterPro" id="IPR045864">
    <property type="entry name" value="aa-tRNA-synth_II/BPL/LPL"/>
</dbReference>
<dbReference type="InterPro" id="IPR004522">
    <property type="entry name" value="Asn-tRNA-ligase"/>
</dbReference>
<dbReference type="InterPro" id="IPR002312">
    <property type="entry name" value="Asp/Asn-tRNA-synth_IIb"/>
</dbReference>
<dbReference type="InterPro" id="IPR012340">
    <property type="entry name" value="NA-bd_OB-fold"/>
</dbReference>
<dbReference type="InterPro" id="IPR004365">
    <property type="entry name" value="NA-bd_OB_tRNA"/>
</dbReference>
<dbReference type="NCBIfam" id="TIGR00457">
    <property type="entry name" value="asnS"/>
    <property type="match status" value="1"/>
</dbReference>
<dbReference type="NCBIfam" id="NF003037">
    <property type="entry name" value="PRK03932.1"/>
    <property type="match status" value="1"/>
</dbReference>
<dbReference type="PANTHER" id="PTHR22594:SF34">
    <property type="entry name" value="ASPARAGINE--TRNA LIGASE, MITOCHONDRIAL-RELATED"/>
    <property type="match status" value="1"/>
</dbReference>
<dbReference type="PANTHER" id="PTHR22594">
    <property type="entry name" value="ASPARTYL/LYSYL-TRNA SYNTHETASE"/>
    <property type="match status" value="1"/>
</dbReference>
<dbReference type="Pfam" id="PF00152">
    <property type="entry name" value="tRNA-synt_2"/>
    <property type="match status" value="1"/>
</dbReference>
<dbReference type="Pfam" id="PF01336">
    <property type="entry name" value="tRNA_anti-codon"/>
    <property type="match status" value="1"/>
</dbReference>
<dbReference type="PRINTS" id="PR01042">
    <property type="entry name" value="TRNASYNTHASP"/>
</dbReference>
<dbReference type="SUPFAM" id="SSF55681">
    <property type="entry name" value="Class II aaRS and biotin synthetases"/>
    <property type="match status" value="1"/>
</dbReference>
<dbReference type="SUPFAM" id="SSF50249">
    <property type="entry name" value="Nucleic acid-binding proteins"/>
    <property type="match status" value="1"/>
</dbReference>
<dbReference type="PROSITE" id="PS50862">
    <property type="entry name" value="AA_TRNA_LIGASE_II"/>
    <property type="match status" value="1"/>
</dbReference>
<name>SYN_ECO57</name>
<protein>
    <recommendedName>
        <fullName evidence="1">Asparagine--tRNA ligase</fullName>
        <ecNumber evidence="1">6.1.1.22</ecNumber>
    </recommendedName>
    <alternativeName>
        <fullName evidence="1">Asparaginyl-tRNA synthetase</fullName>
        <shortName evidence="1">AsnRS</shortName>
    </alternativeName>
</protein>
<comment type="catalytic activity">
    <reaction evidence="1">
        <text>tRNA(Asn) + L-asparagine + ATP = L-asparaginyl-tRNA(Asn) + AMP + diphosphate + H(+)</text>
        <dbReference type="Rhea" id="RHEA:11180"/>
        <dbReference type="Rhea" id="RHEA-COMP:9659"/>
        <dbReference type="Rhea" id="RHEA-COMP:9674"/>
        <dbReference type="ChEBI" id="CHEBI:15378"/>
        <dbReference type="ChEBI" id="CHEBI:30616"/>
        <dbReference type="ChEBI" id="CHEBI:33019"/>
        <dbReference type="ChEBI" id="CHEBI:58048"/>
        <dbReference type="ChEBI" id="CHEBI:78442"/>
        <dbReference type="ChEBI" id="CHEBI:78515"/>
        <dbReference type="ChEBI" id="CHEBI:456215"/>
        <dbReference type="EC" id="6.1.1.22"/>
    </reaction>
</comment>
<comment type="subunit">
    <text evidence="1">Homodimer.</text>
</comment>
<comment type="subcellular location">
    <subcellularLocation>
        <location evidence="1">Cytoplasm</location>
    </subcellularLocation>
</comment>
<comment type="similarity">
    <text evidence="1">Belongs to the class-II aminoacyl-tRNA synthetase family.</text>
</comment>
<organism>
    <name type="scientific">Escherichia coli O157:H7</name>
    <dbReference type="NCBI Taxonomy" id="83334"/>
    <lineage>
        <taxon>Bacteria</taxon>
        <taxon>Pseudomonadati</taxon>
        <taxon>Pseudomonadota</taxon>
        <taxon>Gammaproteobacteria</taxon>
        <taxon>Enterobacterales</taxon>
        <taxon>Enterobacteriaceae</taxon>
        <taxon>Escherichia</taxon>
    </lineage>
</organism>
<keyword id="KW-0030">Aminoacyl-tRNA synthetase</keyword>
<keyword id="KW-0067">ATP-binding</keyword>
<keyword id="KW-0963">Cytoplasm</keyword>
<keyword id="KW-0436">Ligase</keyword>
<keyword id="KW-0547">Nucleotide-binding</keyword>
<keyword id="KW-0648">Protein biosynthesis</keyword>
<keyword id="KW-1185">Reference proteome</keyword>
<sequence>MSVVPVADVLQGRVAVDSEVTVRGWVRTRRDSKAGISFLAVYDGSCFDPVQAVINNSLPNYNEDVLRLTTGCSVIVTGKVVASPGQGQQFEIQTSKVEVAGWVEDPDTYPMAAKRHSIEYLREVAHLRPRTNLIGAVARVRHTLAQALHRFFNEQGFFWVSTPLITASDTEGAGEMFRVSTLDLENLPRNDQGKVDFDKDFFGKESFLTVSGQLNGETYACALSKIYTFGPTFRAENSNTSRHLAEFWMLEPEVAFANLNDIAGLAEAMLKYVFKAVLEERADDMKFFAERVDKDAVSRLERFIEADFAQVDYTEAVTILENCGRKFENPVYWGVDLSSEHERYLAEEHFKAPVVVKNYPKDIKAFYMRLNEDGKTVAAMDVLAPGIGEIIGGSQREERLDVLDERMLEMGLNKEDYWWYRDLRRYGTVPHSGFGLGFERLIAYVTGVQNVRDVIPFPRTPRNASF</sequence>
<reference key="1">
    <citation type="journal article" date="2001" name="Nature">
        <title>Genome sequence of enterohaemorrhagic Escherichia coli O157:H7.</title>
        <authorList>
            <person name="Perna N.T."/>
            <person name="Plunkett G. III"/>
            <person name="Burland V."/>
            <person name="Mau B."/>
            <person name="Glasner J.D."/>
            <person name="Rose D.J."/>
            <person name="Mayhew G.F."/>
            <person name="Evans P.S."/>
            <person name="Gregor J."/>
            <person name="Kirkpatrick H.A."/>
            <person name="Posfai G."/>
            <person name="Hackett J."/>
            <person name="Klink S."/>
            <person name="Boutin A."/>
            <person name="Shao Y."/>
            <person name="Miller L."/>
            <person name="Grotbeck E.J."/>
            <person name="Davis N.W."/>
            <person name="Lim A."/>
            <person name="Dimalanta E.T."/>
            <person name="Potamousis K."/>
            <person name="Apodaca J."/>
            <person name="Anantharaman T.S."/>
            <person name="Lin J."/>
            <person name="Yen G."/>
            <person name="Schwartz D.C."/>
            <person name="Welch R.A."/>
            <person name="Blattner F.R."/>
        </authorList>
    </citation>
    <scope>NUCLEOTIDE SEQUENCE [LARGE SCALE GENOMIC DNA]</scope>
    <source>
        <strain>O157:H7 / EDL933 / ATCC 700927 / EHEC</strain>
    </source>
</reference>
<reference key="2">
    <citation type="journal article" date="2001" name="DNA Res.">
        <title>Complete genome sequence of enterohemorrhagic Escherichia coli O157:H7 and genomic comparison with a laboratory strain K-12.</title>
        <authorList>
            <person name="Hayashi T."/>
            <person name="Makino K."/>
            <person name="Ohnishi M."/>
            <person name="Kurokawa K."/>
            <person name="Ishii K."/>
            <person name="Yokoyama K."/>
            <person name="Han C.-G."/>
            <person name="Ohtsubo E."/>
            <person name="Nakayama K."/>
            <person name="Murata T."/>
            <person name="Tanaka M."/>
            <person name="Tobe T."/>
            <person name="Iida T."/>
            <person name="Takami H."/>
            <person name="Honda T."/>
            <person name="Sasakawa C."/>
            <person name="Ogasawara N."/>
            <person name="Yasunaga T."/>
            <person name="Kuhara S."/>
            <person name="Shiba T."/>
            <person name="Hattori M."/>
            <person name="Shinagawa H."/>
        </authorList>
    </citation>
    <scope>NUCLEOTIDE SEQUENCE [LARGE SCALE GENOMIC DNA]</scope>
    <source>
        <strain>O157:H7 / Sakai / RIMD 0509952 / EHEC</strain>
    </source>
</reference>
<evidence type="ECO:0000255" key="1">
    <source>
        <dbReference type="HAMAP-Rule" id="MF_00534"/>
    </source>
</evidence>